<sequence length="484" mass="53124">MYKTVLKNSGRIQRNFIFRNVSSTLQRSLATSASTSSSTTTSNAETGELHVSTPLDSPSVHPPDGSSISLKSATRDASLFGTRPIYLDVQATTPVDPRVLDKMLEFYTGLYGNPHSSTHAYGWETDKEVEKARGYIADVINADPKEIIFTSGATETNNMAIKGVPRFYKKTKKHIITTQTEHKCVLDSARHMQDEGFDITYLPVNSEGLINLDDLKKAIRKDTVLVSVMAVNNEIGVIQPLKEIGQICRENKIFFHTDAAQAYGKIPIDVNEMNIDLLSISSHKIYGPKGIGACYVRRRPRVRLDPIITGGGQERGLRSGTLAPPLVAGFGEAARLMKQESAFDKKHIEKLSTKLKNGLLSIPSTQFNGCNNPTYQYPGCVNVSFAYIEGESLLMALKDIALSSGSACTSASLEPSYVLHALGADDALAHSSIRFGIGRFTTEAEVDYVIQAINERVDFLRKMSPLWEMVQGGIDLNSIEWSGH</sequence>
<reference key="1">
    <citation type="journal article" date="1998" name="Yeast">
        <title>The SPL1 tRNA splicing gene of Candida maltosa and Candida albicans.</title>
        <authorList>
            <person name="Plant E.P."/>
            <person name="Becher D."/>
            <person name="Poulter R.T.M."/>
        </authorList>
    </citation>
    <scope>NUCLEOTIDE SEQUENCE [GENOMIC DNA]</scope>
    <source>
        <strain>CHAU1</strain>
        <strain>L4</strain>
    </source>
</reference>
<name>NFS1_CANMA</name>
<dbReference type="EC" id="2.8.1.7" evidence="4"/>
<dbReference type="EMBL" id="AF000115">
    <property type="protein sequence ID" value="AAC49935.1"/>
    <property type="molecule type" value="Genomic_DNA"/>
</dbReference>
<dbReference type="EMBL" id="AF000116">
    <property type="protein sequence ID" value="AAC49936.1"/>
    <property type="molecule type" value="Genomic_DNA"/>
</dbReference>
<dbReference type="EMBL" id="AF000117">
    <property type="protein sequence ID" value="AAC49937.1"/>
    <property type="molecule type" value="Genomic_DNA"/>
</dbReference>
<dbReference type="EMBL" id="AF000118">
    <property type="protein sequence ID" value="AAC49938.1"/>
    <property type="molecule type" value="Genomic_DNA"/>
</dbReference>
<dbReference type="SMR" id="P87187"/>
<dbReference type="GO" id="GO:1990221">
    <property type="term" value="C:L-cysteine desulfurase complex"/>
    <property type="evidence" value="ECO:0007669"/>
    <property type="project" value="UniProtKB-ARBA"/>
</dbReference>
<dbReference type="GO" id="GO:0005739">
    <property type="term" value="C:mitochondrion"/>
    <property type="evidence" value="ECO:0007669"/>
    <property type="project" value="UniProtKB-SubCell"/>
</dbReference>
<dbReference type="GO" id="GO:0005634">
    <property type="term" value="C:nucleus"/>
    <property type="evidence" value="ECO:0007669"/>
    <property type="project" value="TreeGrafter"/>
</dbReference>
<dbReference type="GO" id="GO:0031071">
    <property type="term" value="F:cysteine desulfurase activity"/>
    <property type="evidence" value="ECO:0007669"/>
    <property type="project" value="UniProtKB-EC"/>
</dbReference>
<dbReference type="GO" id="GO:0051536">
    <property type="term" value="F:iron-sulfur cluster binding"/>
    <property type="evidence" value="ECO:0007669"/>
    <property type="project" value="UniProtKB-KW"/>
</dbReference>
<dbReference type="GO" id="GO:0046872">
    <property type="term" value="F:metal ion binding"/>
    <property type="evidence" value="ECO:0007669"/>
    <property type="project" value="UniProtKB-KW"/>
</dbReference>
<dbReference type="GO" id="GO:0030170">
    <property type="term" value="F:pyridoxal phosphate binding"/>
    <property type="evidence" value="ECO:0007669"/>
    <property type="project" value="InterPro"/>
</dbReference>
<dbReference type="GO" id="GO:0044571">
    <property type="term" value="P:[2Fe-2S] cluster assembly"/>
    <property type="evidence" value="ECO:0007669"/>
    <property type="project" value="InterPro"/>
</dbReference>
<dbReference type="GO" id="GO:0008033">
    <property type="term" value="P:tRNA processing"/>
    <property type="evidence" value="ECO:0007669"/>
    <property type="project" value="UniProtKB-KW"/>
</dbReference>
<dbReference type="FunFam" id="3.40.640.10:FF:000003">
    <property type="entry name" value="Cysteine desulfurase IscS"/>
    <property type="match status" value="1"/>
</dbReference>
<dbReference type="FunFam" id="3.90.1150.10:FF:000002">
    <property type="entry name" value="Cysteine desulfurase IscS"/>
    <property type="match status" value="1"/>
</dbReference>
<dbReference type="Gene3D" id="3.90.1150.10">
    <property type="entry name" value="Aspartate Aminotransferase, domain 1"/>
    <property type="match status" value="1"/>
</dbReference>
<dbReference type="Gene3D" id="3.40.640.10">
    <property type="entry name" value="Type I PLP-dependent aspartate aminotransferase-like (Major domain)"/>
    <property type="match status" value="1"/>
</dbReference>
<dbReference type="HAMAP" id="MF_00331">
    <property type="entry name" value="Cys_desulf_IscS"/>
    <property type="match status" value="1"/>
</dbReference>
<dbReference type="InterPro" id="IPR000192">
    <property type="entry name" value="Aminotrans_V_dom"/>
</dbReference>
<dbReference type="InterPro" id="IPR020578">
    <property type="entry name" value="Aminotrans_V_PyrdxlP_BS"/>
</dbReference>
<dbReference type="InterPro" id="IPR010240">
    <property type="entry name" value="Cys_deSase_IscS"/>
</dbReference>
<dbReference type="InterPro" id="IPR015424">
    <property type="entry name" value="PyrdxlP-dep_Trfase"/>
</dbReference>
<dbReference type="InterPro" id="IPR015421">
    <property type="entry name" value="PyrdxlP-dep_Trfase_major"/>
</dbReference>
<dbReference type="InterPro" id="IPR015422">
    <property type="entry name" value="PyrdxlP-dep_Trfase_small"/>
</dbReference>
<dbReference type="NCBIfam" id="NF002806">
    <property type="entry name" value="PRK02948.1"/>
    <property type="match status" value="1"/>
</dbReference>
<dbReference type="NCBIfam" id="NF010611">
    <property type="entry name" value="PRK14012.1"/>
    <property type="match status" value="1"/>
</dbReference>
<dbReference type="PANTHER" id="PTHR11601:SF34">
    <property type="entry name" value="CYSTEINE DESULFURASE"/>
    <property type="match status" value="1"/>
</dbReference>
<dbReference type="PANTHER" id="PTHR11601">
    <property type="entry name" value="CYSTEINE DESULFURYLASE FAMILY MEMBER"/>
    <property type="match status" value="1"/>
</dbReference>
<dbReference type="Pfam" id="PF00266">
    <property type="entry name" value="Aminotran_5"/>
    <property type="match status" value="1"/>
</dbReference>
<dbReference type="SUPFAM" id="SSF53383">
    <property type="entry name" value="PLP-dependent transferases"/>
    <property type="match status" value="1"/>
</dbReference>
<dbReference type="PROSITE" id="PS00595">
    <property type="entry name" value="AA_TRANSFER_CLASS_5"/>
    <property type="match status" value="1"/>
</dbReference>
<keyword id="KW-0408">Iron</keyword>
<keyword id="KW-0411">Iron-sulfur</keyword>
<keyword id="KW-0479">Metal-binding</keyword>
<keyword id="KW-0496">Mitochondrion</keyword>
<keyword id="KW-0663">Pyridoxal phosphate</keyword>
<keyword id="KW-0808">Transferase</keyword>
<keyword id="KW-0809">Transit peptide</keyword>
<keyword id="KW-0819">tRNA processing</keyword>
<accession>P87187</accession>
<accession>P87188</accession>
<accession>P87189</accession>
<evidence type="ECO:0000250" key="1">
    <source>
        <dbReference type="UniProtKB" id="O29689"/>
    </source>
</evidence>
<evidence type="ECO:0000250" key="2">
    <source>
        <dbReference type="UniProtKB" id="P0A6B7"/>
    </source>
</evidence>
<evidence type="ECO:0000250" key="3">
    <source>
        <dbReference type="UniProtKB" id="P0A6B9"/>
    </source>
</evidence>
<evidence type="ECO:0000250" key="4">
    <source>
        <dbReference type="UniProtKB" id="P25374"/>
    </source>
</evidence>
<evidence type="ECO:0000255" key="5"/>
<evidence type="ECO:0000256" key="6">
    <source>
        <dbReference type="SAM" id="MobiDB-lite"/>
    </source>
</evidence>
<evidence type="ECO:0000303" key="7">
    <source>
    </source>
</evidence>
<evidence type="ECO:0000305" key="8"/>
<organism>
    <name type="scientific">Candida maltosa</name>
    <name type="common">Yeast</name>
    <dbReference type="NCBI Taxonomy" id="5479"/>
    <lineage>
        <taxon>Eukaryota</taxon>
        <taxon>Fungi</taxon>
        <taxon>Dikarya</taxon>
        <taxon>Ascomycota</taxon>
        <taxon>Saccharomycotina</taxon>
        <taxon>Pichiomycetes</taxon>
        <taxon>Debaryomycetaceae</taxon>
        <taxon>Candida/Lodderomyces clade</taxon>
        <taxon>Candida</taxon>
    </lineage>
</organism>
<protein>
    <recommendedName>
        <fullName evidence="4">Cysteine desulfurase, mitochondrial</fullName>
        <ecNumber evidence="4">2.8.1.7</ecNumber>
    </recommendedName>
    <alternativeName>
        <fullName evidence="7">tRNA-splicing protein SPL1</fullName>
    </alternativeName>
</protein>
<comment type="function">
    <text evidence="4">Catalyzes the removal of elemental sulfur from cysteine to produce alanine. It supplies the inorganic sulfur for iron-sulfur (Fe-S) clusters. Plays a role in both tRNA-processing and mitochondrial metabolism. Involved in the 2-thio-modification of both 5-carboxymethylaminomethyl-2-thiouridine in mitochondrial tRNAs and 5-methoxycarbonylmethyl-2-thiouridine (mcm5s2U) in cytoplasmic tRNAs.</text>
</comment>
<comment type="catalytic activity">
    <reaction evidence="4">
        <text>(sulfur carrier)-H + L-cysteine = (sulfur carrier)-SH + L-alanine</text>
        <dbReference type="Rhea" id="RHEA:43892"/>
        <dbReference type="Rhea" id="RHEA-COMP:14737"/>
        <dbReference type="Rhea" id="RHEA-COMP:14739"/>
        <dbReference type="ChEBI" id="CHEBI:29917"/>
        <dbReference type="ChEBI" id="CHEBI:35235"/>
        <dbReference type="ChEBI" id="CHEBI:57972"/>
        <dbReference type="ChEBI" id="CHEBI:64428"/>
        <dbReference type="EC" id="2.8.1.7"/>
    </reaction>
</comment>
<comment type="cofactor">
    <cofactor evidence="3">
        <name>pyridoxal 5'-phosphate</name>
        <dbReference type="ChEBI" id="CHEBI:597326"/>
    </cofactor>
</comment>
<comment type="subcellular location">
    <subcellularLocation>
        <location evidence="4">Mitochondrion</location>
    </subcellularLocation>
</comment>
<comment type="similarity">
    <text evidence="8">Belongs to the class-V pyridoxal-phosphate-dependent aminotransferase family. NifS/IscS subfamily.</text>
</comment>
<gene>
    <name evidence="7" type="primary">SPL1</name>
</gene>
<feature type="transit peptide" description="Mitochondrion" evidence="5">
    <location>
        <begin position="1"/>
        <end status="unknown"/>
    </location>
</feature>
<feature type="chain" id="PRO_0000001302" description="Cysteine desulfurase, mitochondrial">
    <location>
        <begin status="unknown"/>
        <end position="484"/>
    </location>
</feature>
<feature type="region of interest" description="Disordered" evidence="6">
    <location>
        <begin position="29"/>
        <end position="69"/>
    </location>
</feature>
<feature type="compositionally biased region" description="Low complexity" evidence="6">
    <location>
        <begin position="29"/>
        <end position="42"/>
    </location>
</feature>
<feature type="active site" description="Cysteine persulfide intermediate" evidence="2">
    <location>
        <position position="408"/>
    </location>
</feature>
<feature type="binding site" evidence="3">
    <location>
        <begin position="153"/>
        <end position="154"/>
    </location>
    <ligand>
        <name>pyridoxal 5'-phosphate</name>
        <dbReference type="ChEBI" id="CHEBI:597326"/>
    </ligand>
</feature>
<feature type="binding site" evidence="1">
    <location>
        <position position="233"/>
    </location>
    <ligand>
        <name>pyridoxal 5'-phosphate</name>
        <dbReference type="ChEBI" id="CHEBI:597326"/>
    </ligand>
</feature>
<feature type="binding site" evidence="3">
    <location>
        <position position="261"/>
    </location>
    <ligand>
        <name>pyridoxal 5'-phosphate</name>
        <dbReference type="ChEBI" id="CHEBI:597326"/>
    </ligand>
</feature>
<feature type="binding site" evidence="3">
    <location>
        <begin position="281"/>
        <end position="283"/>
    </location>
    <ligand>
        <name>pyridoxal 5'-phosphate</name>
        <dbReference type="ChEBI" id="CHEBI:597326"/>
    </ligand>
</feature>
<feature type="binding site" evidence="3">
    <location>
        <position position="321"/>
    </location>
    <ligand>
        <name>pyridoxal 5'-phosphate</name>
        <dbReference type="ChEBI" id="CHEBI:597326"/>
    </ligand>
</feature>
<feature type="binding site" description="via persulfide group" evidence="1">
    <location>
        <position position="408"/>
    </location>
    <ligand>
        <name>[2Fe-2S] cluster</name>
        <dbReference type="ChEBI" id="CHEBI:190135"/>
    </ligand>
</feature>
<feature type="modified residue" description="N6-(pyridoxal phosphate)lysine" evidence="3">
    <location>
        <position position="284"/>
    </location>
</feature>
<feature type="sequence variant" description="In strain: CHAU1.">
    <original>T</original>
    <variation>A</variation>
    <location>
        <position position="374"/>
    </location>
</feature>
<feature type="sequence conflict" description="In Ref. 1; AAC49936." evidence="8" ref="1">
    <original>E</original>
    <variation>A</variation>
    <location>
        <position position="155"/>
    </location>
</feature>
<feature type="sequence conflict" description="In Ref. 1; AAC49936." evidence="8" ref="1">
    <location>
        <position position="217"/>
    </location>
</feature>
<proteinExistence type="inferred from homology"/>